<accession>Q9Z3Q7</accession>
<protein>
    <recommendedName>
        <fullName>Rhizobactin siderophore biosynthesis protein RhbF</fullName>
    </recommendedName>
</protein>
<dbReference type="EMBL" id="AF110737">
    <property type="protein sequence ID" value="AAD09417.1"/>
    <property type="molecule type" value="Genomic_DNA"/>
</dbReference>
<dbReference type="EMBL" id="AE006469">
    <property type="protein sequence ID" value="AAK65921.1"/>
    <property type="molecule type" value="Genomic_DNA"/>
</dbReference>
<dbReference type="PIR" id="G95419">
    <property type="entry name" value="G95419"/>
</dbReference>
<dbReference type="PIR" id="T46819">
    <property type="entry name" value="T46819"/>
</dbReference>
<dbReference type="RefSeq" id="NP_436509.1">
    <property type="nucleotide sequence ID" value="NC_003037.1"/>
</dbReference>
<dbReference type="RefSeq" id="WP_010968206.1">
    <property type="nucleotide sequence ID" value="NC_003037.1"/>
</dbReference>
<dbReference type="SMR" id="Q9Z3Q7"/>
<dbReference type="EnsemblBacteria" id="AAK65921">
    <property type="protein sequence ID" value="AAK65921"/>
    <property type="gene ID" value="SMa2410"/>
</dbReference>
<dbReference type="KEGG" id="sme:SMa2410"/>
<dbReference type="PATRIC" id="fig|266834.11.peg.1316"/>
<dbReference type="HOGENOM" id="CLU_018524_1_1_5"/>
<dbReference type="OrthoDB" id="495728at2"/>
<dbReference type="BioCyc" id="MetaCyc:MONOMER-15543"/>
<dbReference type="UniPathway" id="UPA00020"/>
<dbReference type="Proteomes" id="UP000001976">
    <property type="component" value="Plasmid pSymA"/>
</dbReference>
<dbReference type="GO" id="GO:0016881">
    <property type="term" value="F:acid-amino acid ligase activity"/>
    <property type="evidence" value="ECO:0007669"/>
    <property type="project" value="UniProtKB-ARBA"/>
</dbReference>
<dbReference type="GO" id="GO:0019289">
    <property type="term" value="P:rhizobactin 1021 biosynthetic process"/>
    <property type="evidence" value="ECO:0007669"/>
    <property type="project" value="UniProtKB-UniPathway"/>
</dbReference>
<dbReference type="GO" id="GO:0019290">
    <property type="term" value="P:siderophore biosynthetic process"/>
    <property type="evidence" value="ECO:0007669"/>
    <property type="project" value="InterPro"/>
</dbReference>
<dbReference type="Gene3D" id="1.10.510.40">
    <property type="match status" value="1"/>
</dbReference>
<dbReference type="Gene3D" id="3.30.310.280">
    <property type="match status" value="1"/>
</dbReference>
<dbReference type="Gene3D" id="6.10.250.3370">
    <property type="match status" value="1"/>
</dbReference>
<dbReference type="InterPro" id="IPR007310">
    <property type="entry name" value="Aerobactin_biosyn_IucA/IucC_N"/>
</dbReference>
<dbReference type="InterPro" id="IPR022770">
    <property type="entry name" value="IucA/IucC-like_C"/>
</dbReference>
<dbReference type="InterPro" id="IPR037455">
    <property type="entry name" value="LucA/IucC-like"/>
</dbReference>
<dbReference type="PANTHER" id="PTHR34384">
    <property type="entry name" value="L-2,3-DIAMINOPROPANOATE--CITRATE LIGASE"/>
    <property type="match status" value="1"/>
</dbReference>
<dbReference type="PANTHER" id="PTHR34384:SF6">
    <property type="entry name" value="STAPHYLOFERRIN B SYNTHASE"/>
    <property type="match status" value="1"/>
</dbReference>
<dbReference type="Pfam" id="PF06276">
    <property type="entry name" value="FhuF"/>
    <property type="match status" value="1"/>
</dbReference>
<dbReference type="Pfam" id="PF04183">
    <property type="entry name" value="IucA_IucC"/>
    <property type="match status" value="1"/>
</dbReference>
<keyword id="KW-0614">Plasmid</keyword>
<keyword id="KW-1185">Reference proteome</keyword>
<feature type="chain" id="PRO_0000097323" description="Rhizobactin siderophore biosynthesis protein RhbF">
    <location>
        <begin position="1"/>
        <end position="601"/>
    </location>
</feature>
<proteinExistence type="inferred from homology"/>
<sequence length="601" mass="67075">MLMHHDPLLPGAFSEELWQQVSKRLLAKVIEEFAYERVFGVVEEKPGHYRIDIDELQYRFKAKRYVFDNLSVDPASLFKRHGNSDAPLHDPLAFCAEVLPKLGVKPMTVAHFIKELGNTLVSDAHIAARASKTGAELAELDDICMEGETTGHPWVTVSKGRIGLGYSDYLAFTPENRTPTEVLWLGVSKERASFIAEETLTNEGLVREAVGVSRFESFCAKLAARGGSVDTHYMMPVHPWQWDHMIVPHFAADIAAGHIVFLGKGDDLYLPQQSVRTLSNISHPEKSTLKLCMTILNTAVYRGIPGKRALTAAPLTTWLDQLLARDQFLSEECGLVLLGERAGMHYVHPQFSTIEGAPYQFNEMLGCMWRDSLSAHLKSGETGLPLAALLHAGTDGKPVVQALAEKSGMTVSEWTARLFDVVIPPVFHLLAKHGLAFSAHGQNATLILKNGRPERLALRDFIDDVIVCDQAFPESATLPEEVRAVLLCLPADFLIHFIQTTLFICVFRYMSVLLDQRSGLPEHAFWGLARSSILAYQKRFPEMASRFATFDLFGDEYPRLCLNRVRLFTHGYADDDERPVPDFQGMVDNPLVAFDKRSNAA</sequence>
<comment type="pathway">
    <text>Siderophore biosynthesis; rhizobactin biosynthesis.</text>
</comment>
<comment type="similarity">
    <text evidence="1">Belongs to the IucA/IucC family.</text>
</comment>
<gene>
    <name type="primary">rhbF</name>
    <name type="synonym">rhsF</name>
    <name type="ordered locus">RA1263</name>
    <name type="ORF">SMa2410</name>
</gene>
<organism>
    <name type="scientific">Rhizobium meliloti (strain 1021)</name>
    <name type="common">Ensifer meliloti</name>
    <name type="synonym">Sinorhizobium meliloti</name>
    <dbReference type="NCBI Taxonomy" id="266834"/>
    <lineage>
        <taxon>Bacteria</taxon>
        <taxon>Pseudomonadati</taxon>
        <taxon>Pseudomonadota</taxon>
        <taxon>Alphaproteobacteria</taxon>
        <taxon>Hyphomicrobiales</taxon>
        <taxon>Rhizobiaceae</taxon>
        <taxon>Sinorhizobium/Ensifer group</taxon>
        <taxon>Sinorhizobium</taxon>
    </lineage>
</organism>
<geneLocation type="plasmid">
    <name>pSymA</name>
    <name>megaplasmid 1</name>
</geneLocation>
<evidence type="ECO:0000305" key="1"/>
<reference key="1">
    <citation type="journal article" date="2001" name="J. Bacteriol.">
        <title>Genetic organization of the region encoding regulation, biosynthesis, and transport of rhizobactin 1021, a siderophore produced by Sinorhizobium meliloti.</title>
        <authorList>
            <person name="Lynch D."/>
            <person name="O'Brien J."/>
            <person name="Welch T."/>
            <person name="Clarke P."/>
            <person name="Cuiv P.O."/>
            <person name="Crosa J.H."/>
            <person name="O'Connell M."/>
        </authorList>
    </citation>
    <scope>NUCLEOTIDE SEQUENCE [GENOMIC DNA]</scope>
    <source>
        <strain>RCR2011 / SU47</strain>
    </source>
</reference>
<reference key="2">
    <citation type="journal article" date="2001" name="Proc. Natl. Acad. Sci. U.S.A.">
        <title>Nucleotide sequence and predicted functions of the entire Sinorhizobium meliloti pSymA megaplasmid.</title>
        <authorList>
            <person name="Barnett M.J."/>
            <person name="Fisher R.F."/>
            <person name="Jones T."/>
            <person name="Komp C."/>
            <person name="Abola A.P."/>
            <person name="Barloy-Hubler F."/>
            <person name="Bowser L."/>
            <person name="Capela D."/>
            <person name="Galibert F."/>
            <person name="Gouzy J."/>
            <person name="Gurjal M."/>
            <person name="Hong A."/>
            <person name="Huizar L."/>
            <person name="Hyman R.W."/>
            <person name="Kahn D."/>
            <person name="Kahn M.L."/>
            <person name="Kalman S."/>
            <person name="Keating D.H."/>
            <person name="Palm C."/>
            <person name="Peck M.C."/>
            <person name="Surzycki R."/>
            <person name="Wells D.H."/>
            <person name="Yeh K.-C."/>
            <person name="Davis R.W."/>
            <person name="Federspiel N.A."/>
            <person name="Long S.R."/>
        </authorList>
    </citation>
    <scope>NUCLEOTIDE SEQUENCE [LARGE SCALE GENOMIC DNA]</scope>
    <source>
        <strain>1021</strain>
    </source>
</reference>
<reference key="3">
    <citation type="journal article" date="2001" name="Science">
        <title>The composite genome of the legume symbiont Sinorhizobium meliloti.</title>
        <authorList>
            <person name="Galibert F."/>
            <person name="Finan T.M."/>
            <person name="Long S.R."/>
            <person name="Puehler A."/>
            <person name="Abola P."/>
            <person name="Ampe F."/>
            <person name="Barloy-Hubler F."/>
            <person name="Barnett M.J."/>
            <person name="Becker A."/>
            <person name="Boistard P."/>
            <person name="Bothe G."/>
            <person name="Boutry M."/>
            <person name="Bowser L."/>
            <person name="Buhrmester J."/>
            <person name="Cadieu E."/>
            <person name="Capela D."/>
            <person name="Chain P."/>
            <person name="Cowie A."/>
            <person name="Davis R.W."/>
            <person name="Dreano S."/>
            <person name="Federspiel N.A."/>
            <person name="Fisher R.F."/>
            <person name="Gloux S."/>
            <person name="Godrie T."/>
            <person name="Goffeau A."/>
            <person name="Golding B."/>
            <person name="Gouzy J."/>
            <person name="Gurjal M."/>
            <person name="Hernandez-Lucas I."/>
            <person name="Hong A."/>
            <person name="Huizar L."/>
            <person name="Hyman R.W."/>
            <person name="Jones T."/>
            <person name="Kahn D."/>
            <person name="Kahn M.L."/>
            <person name="Kalman S."/>
            <person name="Keating D.H."/>
            <person name="Kiss E."/>
            <person name="Komp C."/>
            <person name="Lelaure V."/>
            <person name="Masuy D."/>
            <person name="Palm C."/>
            <person name="Peck M.C."/>
            <person name="Pohl T.M."/>
            <person name="Portetelle D."/>
            <person name="Purnelle B."/>
            <person name="Ramsperger U."/>
            <person name="Surzycki R."/>
            <person name="Thebault P."/>
            <person name="Vandenbol M."/>
            <person name="Vorhoelter F.J."/>
            <person name="Weidner S."/>
            <person name="Wells D.H."/>
            <person name="Wong K."/>
            <person name="Yeh K.-C."/>
            <person name="Batut J."/>
        </authorList>
    </citation>
    <scope>NUCLEOTIDE SEQUENCE [LARGE SCALE GENOMIC DNA]</scope>
    <source>
        <strain>1021</strain>
    </source>
</reference>
<name>RHBF_RHIME</name>